<reference key="1">
    <citation type="journal article" date="2003" name="Nat. Genet.">
        <title>Comparative analysis of the genome sequences of Bordetella pertussis, Bordetella parapertussis and Bordetella bronchiseptica.</title>
        <authorList>
            <person name="Parkhill J."/>
            <person name="Sebaihia M."/>
            <person name="Preston A."/>
            <person name="Murphy L.D."/>
            <person name="Thomson N.R."/>
            <person name="Harris D.E."/>
            <person name="Holden M.T.G."/>
            <person name="Churcher C.M."/>
            <person name="Bentley S.D."/>
            <person name="Mungall K.L."/>
            <person name="Cerdeno-Tarraga A.-M."/>
            <person name="Temple L."/>
            <person name="James K.D."/>
            <person name="Harris B."/>
            <person name="Quail M.A."/>
            <person name="Achtman M."/>
            <person name="Atkin R."/>
            <person name="Baker S."/>
            <person name="Basham D."/>
            <person name="Bason N."/>
            <person name="Cherevach I."/>
            <person name="Chillingworth T."/>
            <person name="Collins M."/>
            <person name="Cronin A."/>
            <person name="Davis P."/>
            <person name="Doggett J."/>
            <person name="Feltwell T."/>
            <person name="Goble A."/>
            <person name="Hamlin N."/>
            <person name="Hauser H."/>
            <person name="Holroyd S."/>
            <person name="Jagels K."/>
            <person name="Leather S."/>
            <person name="Moule S."/>
            <person name="Norberczak H."/>
            <person name="O'Neil S."/>
            <person name="Ormond D."/>
            <person name="Price C."/>
            <person name="Rabbinowitsch E."/>
            <person name="Rutter S."/>
            <person name="Sanders M."/>
            <person name="Saunders D."/>
            <person name="Seeger K."/>
            <person name="Sharp S."/>
            <person name="Simmonds M."/>
            <person name="Skelton J."/>
            <person name="Squares R."/>
            <person name="Squares S."/>
            <person name="Stevens K."/>
            <person name="Unwin L."/>
            <person name="Whitehead S."/>
            <person name="Barrell B.G."/>
            <person name="Maskell D.J."/>
        </authorList>
    </citation>
    <scope>NUCLEOTIDE SEQUENCE [LARGE SCALE GENOMIC DNA]</scope>
    <source>
        <strain>12822 / ATCC BAA-587 / NCTC 13253</strain>
    </source>
</reference>
<organism>
    <name type="scientific">Bordetella parapertussis (strain 12822 / ATCC BAA-587 / NCTC 13253)</name>
    <dbReference type="NCBI Taxonomy" id="257311"/>
    <lineage>
        <taxon>Bacteria</taxon>
        <taxon>Pseudomonadati</taxon>
        <taxon>Pseudomonadota</taxon>
        <taxon>Betaproteobacteria</taxon>
        <taxon>Burkholderiales</taxon>
        <taxon>Alcaligenaceae</taxon>
        <taxon>Bordetella</taxon>
    </lineage>
</organism>
<accession>Q7W1Q6</accession>
<protein>
    <recommendedName>
        <fullName evidence="1">2,3-bisphosphoglycerate-dependent phosphoglycerate mutase</fullName>
        <shortName evidence="1">BPG-dependent PGAM</shortName>
        <shortName evidence="1">PGAM</shortName>
        <shortName evidence="1">Phosphoglyceromutase</shortName>
        <shortName evidence="1">dPGM</shortName>
        <ecNumber evidence="1">5.4.2.11</ecNumber>
    </recommendedName>
</protein>
<gene>
    <name evidence="1" type="primary">gpmA</name>
    <name type="synonym">gpm</name>
    <name type="ordered locus">BPP0295</name>
</gene>
<name>GPMA_BORPA</name>
<comment type="function">
    <text evidence="1">Catalyzes the interconversion of 2-phosphoglycerate and 3-phosphoglycerate.</text>
</comment>
<comment type="catalytic activity">
    <reaction evidence="1">
        <text>(2R)-2-phosphoglycerate = (2R)-3-phosphoglycerate</text>
        <dbReference type="Rhea" id="RHEA:15901"/>
        <dbReference type="ChEBI" id="CHEBI:58272"/>
        <dbReference type="ChEBI" id="CHEBI:58289"/>
        <dbReference type="EC" id="5.4.2.11"/>
    </reaction>
</comment>
<comment type="pathway">
    <text evidence="1">Carbohydrate degradation; glycolysis; pyruvate from D-glyceraldehyde 3-phosphate: step 3/5.</text>
</comment>
<comment type="subunit">
    <text evidence="1">Homodimer.</text>
</comment>
<comment type="similarity">
    <text evidence="1">Belongs to the phosphoglycerate mutase family. BPG-dependent PGAM subfamily.</text>
</comment>
<keyword id="KW-0312">Gluconeogenesis</keyword>
<keyword id="KW-0324">Glycolysis</keyword>
<keyword id="KW-0413">Isomerase</keyword>
<evidence type="ECO:0000255" key="1">
    <source>
        <dbReference type="HAMAP-Rule" id="MF_01039"/>
    </source>
</evidence>
<dbReference type="EC" id="5.4.2.11" evidence="1"/>
<dbReference type="EMBL" id="BX640423">
    <property type="protein sequence ID" value="CAE40036.1"/>
    <property type="molecule type" value="Genomic_DNA"/>
</dbReference>
<dbReference type="RefSeq" id="WP_010927389.1">
    <property type="nucleotide sequence ID" value="NC_002928.3"/>
</dbReference>
<dbReference type="SMR" id="Q7W1Q6"/>
<dbReference type="GeneID" id="93206526"/>
<dbReference type="KEGG" id="bpa:BPP0295"/>
<dbReference type="HOGENOM" id="CLU_033323_1_1_4"/>
<dbReference type="UniPathway" id="UPA00109">
    <property type="reaction ID" value="UER00186"/>
</dbReference>
<dbReference type="Proteomes" id="UP000001421">
    <property type="component" value="Chromosome"/>
</dbReference>
<dbReference type="GO" id="GO:0004619">
    <property type="term" value="F:phosphoglycerate mutase activity"/>
    <property type="evidence" value="ECO:0007669"/>
    <property type="project" value="UniProtKB-EC"/>
</dbReference>
<dbReference type="GO" id="GO:0006094">
    <property type="term" value="P:gluconeogenesis"/>
    <property type="evidence" value="ECO:0007669"/>
    <property type="project" value="UniProtKB-UniRule"/>
</dbReference>
<dbReference type="GO" id="GO:0006096">
    <property type="term" value="P:glycolytic process"/>
    <property type="evidence" value="ECO:0007669"/>
    <property type="project" value="UniProtKB-UniRule"/>
</dbReference>
<dbReference type="CDD" id="cd07067">
    <property type="entry name" value="HP_PGM_like"/>
    <property type="match status" value="1"/>
</dbReference>
<dbReference type="FunFam" id="3.40.50.1240:FF:000003">
    <property type="entry name" value="2,3-bisphosphoglycerate-dependent phosphoglycerate mutase"/>
    <property type="match status" value="1"/>
</dbReference>
<dbReference type="Gene3D" id="3.40.50.1240">
    <property type="entry name" value="Phosphoglycerate mutase-like"/>
    <property type="match status" value="1"/>
</dbReference>
<dbReference type="HAMAP" id="MF_01039">
    <property type="entry name" value="PGAM_GpmA"/>
    <property type="match status" value="1"/>
</dbReference>
<dbReference type="InterPro" id="IPR013078">
    <property type="entry name" value="His_Pase_superF_clade-1"/>
</dbReference>
<dbReference type="InterPro" id="IPR029033">
    <property type="entry name" value="His_PPase_superfam"/>
</dbReference>
<dbReference type="InterPro" id="IPR001345">
    <property type="entry name" value="PG/BPGM_mutase_AS"/>
</dbReference>
<dbReference type="InterPro" id="IPR005952">
    <property type="entry name" value="Phosphogly_mut1"/>
</dbReference>
<dbReference type="NCBIfam" id="TIGR01258">
    <property type="entry name" value="pgm_1"/>
    <property type="match status" value="1"/>
</dbReference>
<dbReference type="NCBIfam" id="NF010713">
    <property type="entry name" value="PRK14115.1"/>
    <property type="match status" value="1"/>
</dbReference>
<dbReference type="PANTHER" id="PTHR11931">
    <property type="entry name" value="PHOSPHOGLYCERATE MUTASE"/>
    <property type="match status" value="1"/>
</dbReference>
<dbReference type="Pfam" id="PF00300">
    <property type="entry name" value="His_Phos_1"/>
    <property type="match status" value="2"/>
</dbReference>
<dbReference type="PIRSF" id="PIRSF000709">
    <property type="entry name" value="6PFK_2-Ptase"/>
    <property type="match status" value="1"/>
</dbReference>
<dbReference type="SMART" id="SM00855">
    <property type="entry name" value="PGAM"/>
    <property type="match status" value="1"/>
</dbReference>
<dbReference type="SUPFAM" id="SSF53254">
    <property type="entry name" value="Phosphoglycerate mutase-like"/>
    <property type="match status" value="1"/>
</dbReference>
<dbReference type="PROSITE" id="PS00175">
    <property type="entry name" value="PG_MUTASE"/>
    <property type="match status" value="1"/>
</dbReference>
<sequence length="250" mass="28174">MYKLVLIRHGESQWNLENRFTGWTDVDLTETGREQARKAGELLKREGYAFDLAYTSVLKRAIRTLWIALDALDAMYTPVGINWRLNERHYGQLQGLNKAETAAKYGDEQVLIWRRAYAIAPEPLDLEDPRHPRFDGRYAKIPADQLPATECLKDTVARVLPFWNESIAPAIRAGRRVLVAAHGNSLRALIKHLDNVSDDDIVGVNIPTGQPLVYELDEDLKPIRHYYLGDAAEIEAAMAAVAAQGKAKKD</sequence>
<feature type="chain" id="PRO_0000179853" description="2,3-bisphosphoglycerate-dependent phosphoglycerate mutase">
    <location>
        <begin position="1"/>
        <end position="250"/>
    </location>
</feature>
<feature type="active site" description="Tele-phosphohistidine intermediate" evidence="1">
    <location>
        <position position="9"/>
    </location>
</feature>
<feature type="active site" description="Proton donor/acceptor" evidence="1">
    <location>
        <position position="87"/>
    </location>
</feature>
<feature type="binding site" evidence="1">
    <location>
        <begin position="8"/>
        <end position="15"/>
    </location>
    <ligand>
        <name>substrate</name>
    </ligand>
</feature>
<feature type="binding site" evidence="1">
    <location>
        <begin position="21"/>
        <end position="22"/>
    </location>
    <ligand>
        <name>substrate</name>
    </ligand>
</feature>
<feature type="binding site" evidence="1">
    <location>
        <position position="60"/>
    </location>
    <ligand>
        <name>substrate</name>
    </ligand>
</feature>
<feature type="binding site" evidence="1">
    <location>
        <begin position="87"/>
        <end position="90"/>
    </location>
    <ligand>
        <name>substrate</name>
    </ligand>
</feature>
<feature type="binding site" evidence="1">
    <location>
        <position position="98"/>
    </location>
    <ligand>
        <name>substrate</name>
    </ligand>
</feature>
<feature type="binding site" evidence="1">
    <location>
        <begin position="114"/>
        <end position="115"/>
    </location>
    <ligand>
        <name>substrate</name>
    </ligand>
</feature>
<feature type="binding site" evidence="1">
    <location>
        <begin position="183"/>
        <end position="184"/>
    </location>
    <ligand>
        <name>substrate</name>
    </ligand>
</feature>
<feature type="site" description="Transition state stabilizer" evidence="1">
    <location>
        <position position="182"/>
    </location>
</feature>
<proteinExistence type="inferred from homology"/>